<accession>Q0HGA2</accession>
<feature type="chain" id="PRO_1000008497" description="Holo-[acyl-carrier-protein] synthase">
    <location>
        <begin position="1"/>
        <end position="127"/>
    </location>
</feature>
<feature type="binding site" evidence="1">
    <location>
        <position position="9"/>
    </location>
    <ligand>
        <name>Mg(2+)</name>
        <dbReference type="ChEBI" id="CHEBI:18420"/>
    </ligand>
</feature>
<feature type="binding site" evidence="1">
    <location>
        <position position="58"/>
    </location>
    <ligand>
        <name>Mg(2+)</name>
        <dbReference type="ChEBI" id="CHEBI:18420"/>
    </ligand>
</feature>
<keyword id="KW-0963">Cytoplasm</keyword>
<keyword id="KW-0275">Fatty acid biosynthesis</keyword>
<keyword id="KW-0276">Fatty acid metabolism</keyword>
<keyword id="KW-0444">Lipid biosynthesis</keyword>
<keyword id="KW-0443">Lipid metabolism</keyword>
<keyword id="KW-0460">Magnesium</keyword>
<keyword id="KW-0479">Metal-binding</keyword>
<keyword id="KW-0808">Transferase</keyword>
<sequence>MAIVGLGTDIVEIERITAHVARSGDKLAKRVLTEAEFDIYQQHSQPSRYLAKRFAAKEAAAKALGTGIGRGVSFQHIHIGNTPDGAPTIDFTQGAQQRLALLNGVVGHISIADEKSYAIATVILESR</sequence>
<protein>
    <recommendedName>
        <fullName evidence="1">Holo-[acyl-carrier-protein] synthase</fullName>
        <shortName evidence="1">Holo-ACP synthase</shortName>
        <ecNumber evidence="1">2.7.8.7</ecNumber>
    </recommendedName>
    <alternativeName>
        <fullName evidence="1">4'-phosphopantetheinyl transferase AcpS</fullName>
    </alternativeName>
</protein>
<name>ACPS_SHESM</name>
<gene>
    <name evidence="1" type="primary">acpS</name>
    <name type="ordered locus">Shewmr4_2844</name>
</gene>
<comment type="function">
    <text evidence="1">Transfers the 4'-phosphopantetheine moiety from coenzyme A to a Ser of acyl-carrier-protein.</text>
</comment>
<comment type="catalytic activity">
    <reaction evidence="1">
        <text>apo-[ACP] + CoA = holo-[ACP] + adenosine 3',5'-bisphosphate + H(+)</text>
        <dbReference type="Rhea" id="RHEA:12068"/>
        <dbReference type="Rhea" id="RHEA-COMP:9685"/>
        <dbReference type="Rhea" id="RHEA-COMP:9690"/>
        <dbReference type="ChEBI" id="CHEBI:15378"/>
        <dbReference type="ChEBI" id="CHEBI:29999"/>
        <dbReference type="ChEBI" id="CHEBI:57287"/>
        <dbReference type="ChEBI" id="CHEBI:58343"/>
        <dbReference type="ChEBI" id="CHEBI:64479"/>
        <dbReference type="EC" id="2.7.8.7"/>
    </reaction>
</comment>
<comment type="cofactor">
    <cofactor evidence="1">
        <name>Mg(2+)</name>
        <dbReference type="ChEBI" id="CHEBI:18420"/>
    </cofactor>
</comment>
<comment type="subcellular location">
    <subcellularLocation>
        <location evidence="1">Cytoplasm</location>
    </subcellularLocation>
</comment>
<comment type="similarity">
    <text evidence="1">Belongs to the P-Pant transferase superfamily. AcpS family.</text>
</comment>
<evidence type="ECO:0000255" key="1">
    <source>
        <dbReference type="HAMAP-Rule" id="MF_00101"/>
    </source>
</evidence>
<organism>
    <name type="scientific">Shewanella sp. (strain MR-4)</name>
    <dbReference type="NCBI Taxonomy" id="60480"/>
    <lineage>
        <taxon>Bacteria</taxon>
        <taxon>Pseudomonadati</taxon>
        <taxon>Pseudomonadota</taxon>
        <taxon>Gammaproteobacteria</taxon>
        <taxon>Alteromonadales</taxon>
        <taxon>Shewanellaceae</taxon>
        <taxon>Shewanella</taxon>
    </lineage>
</organism>
<dbReference type="EC" id="2.7.8.7" evidence="1"/>
<dbReference type="EMBL" id="CP000446">
    <property type="protein sequence ID" value="ABI39915.1"/>
    <property type="molecule type" value="Genomic_DNA"/>
</dbReference>
<dbReference type="RefSeq" id="WP_011623594.1">
    <property type="nucleotide sequence ID" value="NC_008321.1"/>
</dbReference>
<dbReference type="SMR" id="Q0HGA2"/>
<dbReference type="GeneID" id="94728945"/>
<dbReference type="KEGG" id="she:Shewmr4_2844"/>
<dbReference type="HOGENOM" id="CLU_089696_3_1_6"/>
<dbReference type="GO" id="GO:0005737">
    <property type="term" value="C:cytoplasm"/>
    <property type="evidence" value="ECO:0007669"/>
    <property type="project" value="UniProtKB-SubCell"/>
</dbReference>
<dbReference type="GO" id="GO:0008897">
    <property type="term" value="F:holo-[acyl-carrier-protein] synthase activity"/>
    <property type="evidence" value="ECO:0007669"/>
    <property type="project" value="UniProtKB-UniRule"/>
</dbReference>
<dbReference type="GO" id="GO:0000287">
    <property type="term" value="F:magnesium ion binding"/>
    <property type="evidence" value="ECO:0007669"/>
    <property type="project" value="UniProtKB-UniRule"/>
</dbReference>
<dbReference type="GO" id="GO:0006633">
    <property type="term" value="P:fatty acid biosynthetic process"/>
    <property type="evidence" value="ECO:0007669"/>
    <property type="project" value="UniProtKB-UniRule"/>
</dbReference>
<dbReference type="FunFam" id="3.90.470.20:FF:000001">
    <property type="entry name" value="Holo-[acyl-carrier-protein] synthase"/>
    <property type="match status" value="1"/>
</dbReference>
<dbReference type="Gene3D" id="3.90.470.20">
    <property type="entry name" value="4'-phosphopantetheinyl transferase domain"/>
    <property type="match status" value="1"/>
</dbReference>
<dbReference type="HAMAP" id="MF_00101">
    <property type="entry name" value="AcpS"/>
    <property type="match status" value="1"/>
</dbReference>
<dbReference type="InterPro" id="IPR008278">
    <property type="entry name" value="4-PPantetheinyl_Trfase_dom"/>
</dbReference>
<dbReference type="InterPro" id="IPR037143">
    <property type="entry name" value="4-PPantetheinyl_Trfase_dom_sf"/>
</dbReference>
<dbReference type="InterPro" id="IPR002582">
    <property type="entry name" value="ACPS"/>
</dbReference>
<dbReference type="InterPro" id="IPR004568">
    <property type="entry name" value="Ppantetheine-prot_Trfase_dom"/>
</dbReference>
<dbReference type="NCBIfam" id="TIGR00516">
    <property type="entry name" value="acpS"/>
    <property type="match status" value="1"/>
</dbReference>
<dbReference type="NCBIfam" id="TIGR00556">
    <property type="entry name" value="pantethn_trn"/>
    <property type="match status" value="1"/>
</dbReference>
<dbReference type="Pfam" id="PF01648">
    <property type="entry name" value="ACPS"/>
    <property type="match status" value="1"/>
</dbReference>
<dbReference type="SUPFAM" id="SSF56214">
    <property type="entry name" value="4'-phosphopantetheinyl transferase"/>
    <property type="match status" value="1"/>
</dbReference>
<proteinExistence type="inferred from homology"/>
<reference key="1">
    <citation type="submission" date="2006-08" db="EMBL/GenBank/DDBJ databases">
        <title>Complete sequence of Shewanella sp. MR-4.</title>
        <authorList>
            <consortium name="US DOE Joint Genome Institute"/>
            <person name="Copeland A."/>
            <person name="Lucas S."/>
            <person name="Lapidus A."/>
            <person name="Barry K."/>
            <person name="Detter J.C."/>
            <person name="Glavina del Rio T."/>
            <person name="Hammon N."/>
            <person name="Israni S."/>
            <person name="Dalin E."/>
            <person name="Tice H."/>
            <person name="Pitluck S."/>
            <person name="Kiss H."/>
            <person name="Brettin T."/>
            <person name="Bruce D."/>
            <person name="Han C."/>
            <person name="Tapia R."/>
            <person name="Gilna P."/>
            <person name="Schmutz J."/>
            <person name="Larimer F."/>
            <person name="Land M."/>
            <person name="Hauser L."/>
            <person name="Kyrpides N."/>
            <person name="Mikhailova N."/>
            <person name="Nealson K."/>
            <person name="Konstantinidis K."/>
            <person name="Klappenbach J."/>
            <person name="Tiedje J."/>
            <person name="Richardson P."/>
        </authorList>
    </citation>
    <scope>NUCLEOTIDE SEQUENCE [LARGE SCALE GENOMIC DNA]</scope>
    <source>
        <strain>MR-4</strain>
    </source>
</reference>